<evidence type="ECO:0000250" key="1"/>
<evidence type="ECO:0000256" key="2">
    <source>
        <dbReference type="SAM" id="MobiDB-lite"/>
    </source>
</evidence>
<evidence type="ECO:0000305" key="3"/>
<keyword id="KW-0009">Actin-binding</keyword>
<keyword id="KW-0963">Cytoplasm</keyword>
<keyword id="KW-0206">Cytoskeleton</keyword>
<keyword id="KW-1185">Reference proteome</keyword>
<gene>
    <name type="primary">Arpc2</name>
    <name type="synonym">Arc-p34</name>
    <name type="ORF">CG10954</name>
</gene>
<dbReference type="EMBL" id="AE014134">
    <property type="protein sequence ID" value="AAF53892.2"/>
    <property type="molecule type" value="Genomic_DNA"/>
</dbReference>
<dbReference type="EMBL" id="AY060391">
    <property type="protein sequence ID" value="AAL25430.1"/>
    <property type="molecule type" value="mRNA"/>
</dbReference>
<dbReference type="RefSeq" id="NP_001286102.1">
    <property type="nucleotide sequence ID" value="NM_001299173.1"/>
</dbReference>
<dbReference type="RefSeq" id="NP_610033.1">
    <property type="nucleotide sequence ID" value="NM_136189.4"/>
</dbReference>
<dbReference type="SMR" id="Q9VIM5"/>
<dbReference type="BioGRID" id="61277">
    <property type="interactions" value="17"/>
</dbReference>
<dbReference type="ComplexPortal" id="CPX-2589">
    <property type="entry name" value="Actin-related protein 2/3 complex, Arpc3B variant"/>
</dbReference>
<dbReference type="ComplexPortal" id="CPX-2739">
    <property type="entry name" value="Actin-related protein 2/3 complex, Arpc3A variant"/>
</dbReference>
<dbReference type="DIP" id="DIP-19044N"/>
<dbReference type="FunCoup" id="Q9VIM5">
    <property type="interactions" value="1651"/>
</dbReference>
<dbReference type="IntAct" id="Q9VIM5">
    <property type="interactions" value="19"/>
</dbReference>
<dbReference type="STRING" id="7227.FBpp0312086"/>
<dbReference type="PaxDb" id="7227-FBpp0080890"/>
<dbReference type="DNASU" id="35311"/>
<dbReference type="EnsemblMetazoa" id="FBtr0081358">
    <property type="protein sequence ID" value="FBpp0080890"/>
    <property type="gene ID" value="FBgn0032859"/>
</dbReference>
<dbReference type="EnsemblMetazoa" id="FBtr0346418">
    <property type="protein sequence ID" value="FBpp0312086"/>
    <property type="gene ID" value="FBgn0032859"/>
</dbReference>
<dbReference type="GeneID" id="35311"/>
<dbReference type="KEGG" id="dme:Dmel_CG10954"/>
<dbReference type="UCSC" id="CG10954-RA">
    <property type="organism name" value="d. melanogaster"/>
</dbReference>
<dbReference type="AGR" id="FB:FBgn0032859"/>
<dbReference type="CTD" id="10109"/>
<dbReference type="FlyBase" id="FBgn0032859">
    <property type="gene designation" value="Arpc2"/>
</dbReference>
<dbReference type="VEuPathDB" id="VectorBase:FBgn0032859"/>
<dbReference type="eggNOG" id="KOG2826">
    <property type="taxonomic scope" value="Eukaryota"/>
</dbReference>
<dbReference type="HOGENOM" id="CLU_059439_2_0_1"/>
<dbReference type="InParanoid" id="Q9VIM5"/>
<dbReference type="OMA" id="FRSYFHY"/>
<dbReference type="OrthoDB" id="148331at2759"/>
<dbReference type="PhylomeDB" id="Q9VIM5"/>
<dbReference type="Reactome" id="R-DME-2029482">
    <property type="pathway name" value="Regulation of actin dynamics for phagocytic cup formation"/>
</dbReference>
<dbReference type="Reactome" id="R-DME-3928662">
    <property type="pathway name" value="EPHB-mediated forward signaling"/>
</dbReference>
<dbReference type="Reactome" id="R-DME-5663213">
    <property type="pathway name" value="RHO GTPases Activate WASPs and WAVEs"/>
</dbReference>
<dbReference type="Reactome" id="R-DME-8856828">
    <property type="pathway name" value="Clathrin-mediated endocytosis"/>
</dbReference>
<dbReference type="BioGRID-ORCS" id="35311">
    <property type="hits" value="1 hit in 1 CRISPR screen"/>
</dbReference>
<dbReference type="GenomeRNAi" id="35311"/>
<dbReference type="PRO" id="PR:Q9VIM5"/>
<dbReference type="Proteomes" id="UP000000803">
    <property type="component" value="Chromosome 2L"/>
</dbReference>
<dbReference type="Bgee" id="FBgn0032859">
    <property type="expression patterns" value="Expressed in ovary and 162 other cell types or tissues"/>
</dbReference>
<dbReference type="ExpressionAtlas" id="Q9VIM5">
    <property type="expression patterns" value="baseline and differential"/>
</dbReference>
<dbReference type="GO" id="GO:0045179">
    <property type="term" value="C:apical cortex"/>
    <property type="evidence" value="ECO:0007005"/>
    <property type="project" value="FlyBase"/>
</dbReference>
<dbReference type="GO" id="GO:0005885">
    <property type="term" value="C:Arp2/3 protein complex"/>
    <property type="evidence" value="ECO:0000250"/>
    <property type="project" value="FlyBase"/>
</dbReference>
<dbReference type="GO" id="GO:0051015">
    <property type="term" value="F:actin filament binding"/>
    <property type="evidence" value="ECO:0000318"/>
    <property type="project" value="GO_Central"/>
</dbReference>
<dbReference type="GO" id="GO:0005200">
    <property type="term" value="F:structural constituent of cytoskeleton"/>
    <property type="evidence" value="ECO:0000250"/>
    <property type="project" value="FlyBase"/>
</dbReference>
<dbReference type="GO" id="GO:0030041">
    <property type="term" value="P:actin filament polymerization"/>
    <property type="evidence" value="ECO:0007669"/>
    <property type="project" value="InterPro"/>
</dbReference>
<dbReference type="GO" id="GO:0034314">
    <property type="term" value="P:Arp2/3 complex-mediated actin nucleation"/>
    <property type="evidence" value="ECO:0000250"/>
    <property type="project" value="FlyBase"/>
</dbReference>
<dbReference type="GO" id="GO:0030031">
    <property type="term" value="P:cell projection assembly"/>
    <property type="evidence" value="ECO:0000315"/>
    <property type="project" value="FlyBase"/>
</dbReference>
<dbReference type="GO" id="GO:0030866">
    <property type="term" value="P:cortical actin cytoskeleton organization"/>
    <property type="evidence" value="ECO:0000315"/>
    <property type="project" value="FlyBase"/>
</dbReference>
<dbReference type="GO" id="GO:0008360">
    <property type="term" value="P:regulation of cell shape"/>
    <property type="evidence" value="ECO:0000315"/>
    <property type="project" value="FlyBase"/>
</dbReference>
<dbReference type="FunFam" id="3.30.1460.20:FF:000002">
    <property type="entry name" value="Arp2/3 complex 34 kDa subunit"/>
    <property type="match status" value="1"/>
</dbReference>
<dbReference type="FunFam" id="3.30.1460.20:FF:000004">
    <property type="entry name" value="Arp2/3 complex 34 kDa subunit"/>
    <property type="match status" value="1"/>
</dbReference>
<dbReference type="Gene3D" id="3.30.1460.20">
    <property type="match status" value="2"/>
</dbReference>
<dbReference type="InterPro" id="IPR007188">
    <property type="entry name" value="ARPC2"/>
</dbReference>
<dbReference type="InterPro" id="IPR034666">
    <property type="entry name" value="ARPC2/4"/>
</dbReference>
<dbReference type="PANTHER" id="PTHR12058:SF0">
    <property type="entry name" value="ACTIN-RELATED PROTEIN 2_3 COMPLEX SUBUNIT 2"/>
    <property type="match status" value="1"/>
</dbReference>
<dbReference type="PANTHER" id="PTHR12058">
    <property type="entry name" value="ARP2/3 COMPLEX 34 KDA SUBUNIT"/>
    <property type="match status" value="1"/>
</dbReference>
<dbReference type="Pfam" id="PF04045">
    <property type="entry name" value="P34-Arc"/>
    <property type="match status" value="1"/>
</dbReference>
<dbReference type="SUPFAM" id="SSF69645">
    <property type="entry name" value="Arp2/3 complex subunits"/>
    <property type="match status" value="2"/>
</dbReference>
<comment type="function">
    <text evidence="1">Functions as actin-binding component of the Arp2/3 complex which is involved in regulation of actin polymerization and together with an activating nucleation-promoting factor (NPF) mediates the formation of branched actin networks. Seems to contact the mother actin filament (By similarity).</text>
</comment>
<comment type="subunit">
    <text evidence="1">Component of the Arp2/3 complex.</text>
</comment>
<comment type="interaction">
    <interactant intactId="EBI-143351">
        <id>Q9VIM5</id>
    </interactant>
    <interactant intactId="EBI-2109075">
        <id>Q9VF28</id>
        <label>Arpc3A</label>
    </interactant>
    <organismsDiffer>false</organismsDiffer>
    <experiments>2</experiments>
</comment>
<comment type="subcellular location">
    <subcellularLocation>
        <location evidence="1">Cytoplasm</location>
        <location evidence="1">Cytoskeleton</location>
    </subcellularLocation>
</comment>
<comment type="similarity">
    <text evidence="3">Belongs to the ARPC2 family.</text>
</comment>
<accession>Q9VIM5</accession>
<accession>Q95T07</accession>
<feature type="chain" id="PRO_0000124039" description="Actin-related protein 2/3 complex subunit 2">
    <location>
        <begin position="1"/>
        <end position="301"/>
    </location>
</feature>
<feature type="region of interest" description="Disordered" evidence="2">
    <location>
        <begin position="281"/>
        <end position="301"/>
    </location>
</feature>
<feature type="compositionally biased region" description="Basic and acidic residues" evidence="2">
    <location>
        <begin position="281"/>
        <end position="291"/>
    </location>
</feature>
<protein>
    <recommendedName>
        <fullName>Actin-related protein 2/3 complex subunit 2</fullName>
    </recommendedName>
    <alternativeName>
        <fullName>Arp2/3 complex 34 kDa subunit</fullName>
        <shortName>p34-ARC</shortName>
    </alternativeName>
</protein>
<organism>
    <name type="scientific">Drosophila melanogaster</name>
    <name type="common">Fruit fly</name>
    <dbReference type="NCBI Taxonomy" id="7227"/>
    <lineage>
        <taxon>Eukaryota</taxon>
        <taxon>Metazoa</taxon>
        <taxon>Ecdysozoa</taxon>
        <taxon>Arthropoda</taxon>
        <taxon>Hexapoda</taxon>
        <taxon>Insecta</taxon>
        <taxon>Pterygota</taxon>
        <taxon>Neoptera</taxon>
        <taxon>Endopterygota</taxon>
        <taxon>Diptera</taxon>
        <taxon>Brachycera</taxon>
        <taxon>Muscomorpha</taxon>
        <taxon>Ephydroidea</taxon>
        <taxon>Drosophilidae</taxon>
        <taxon>Drosophila</taxon>
        <taxon>Sophophora</taxon>
    </lineage>
</organism>
<proteinExistence type="evidence at protein level"/>
<sequence>MILLEINNRIIEETLLVKYRNAQAGLKPESIDIRIADFDGVLYHISNVNGDKTKVRISISLKFYKQLQEHGADELLKREYGSLLTDTEEGYNVSVLINLEEIPEDCEQIAKRIGLLKRNCFASVFEKYFDYQEQGEEGQKRAVINYRNDETLYVEAKPDRVTVVFSTIFRDEDDVIIGKVFMQELREGRRASHTAPQVLFSHREPPLELANTDARVGDNIGYVTFVLFPRHTNKETRDNTINLIHMFRDYLHYHIKCSKAYIHSRMRAKTSDFLKVLNRARPEPKNTEKKTITGRTFKRID</sequence>
<name>ARPC2_DROME</name>
<reference key="1">
    <citation type="journal article" date="2000" name="Science">
        <title>The genome sequence of Drosophila melanogaster.</title>
        <authorList>
            <person name="Adams M.D."/>
            <person name="Celniker S.E."/>
            <person name="Holt R.A."/>
            <person name="Evans C.A."/>
            <person name="Gocayne J.D."/>
            <person name="Amanatides P.G."/>
            <person name="Scherer S.E."/>
            <person name="Li P.W."/>
            <person name="Hoskins R.A."/>
            <person name="Galle R.F."/>
            <person name="George R.A."/>
            <person name="Lewis S.E."/>
            <person name="Richards S."/>
            <person name="Ashburner M."/>
            <person name="Henderson S.N."/>
            <person name="Sutton G.G."/>
            <person name="Wortman J.R."/>
            <person name="Yandell M.D."/>
            <person name="Zhang Q."/>
            <person name="Chen L.X."/>
            <person name="Brandon R.C."/>
            <person name="Rogers Y.-H.C."/>
            <person name="Blazej R.G."/>
            <person name="Champe M."/>
            <person name="Pfeiffer B.D."/>
            <person name="Wan K.H."/>
            <person name="Doyle C."/>
            <person name="Baxter E.G."/>
            <person name="Helt G."/>
            <person name="Nelson C.R."/>
            <person name="Miklos G.L.G."/>
            <person name="Abril J.F."/>
            <person name="Agbayani A."/>
            <person name="An H.-J."/>
            <person name="Andrews-Pfannkoch C."/>
            <person name="Baldwin D."/>
            <person name="Ballew R.M."/>
            <person name="Basu A."/>
            <person name="Baxendale J."/>
            <person name="Bayraktaroglu L."/>
            <person name="Beasley E.M."/>
            <person name="Beeson K.Y."/>
            <person name="Benos P.V."/>
            <person name="Berman B.P."/>
            <person name="Bhandari D."/>
            <person name="Bolshakov S."/>
            <person name="Borkova D."/>
            <person name="Botchan M.R."/>
            <person name="Bouck J."/>
            <person name="Brokstein P."/>
            <person name="Brottier P."/>
            <person name="Burtis K.C."/>
            <person name="Busam D.A."/>
            <person name="Butler H."/>
            <person name="Cadieu E."/>
            <person name="Center A."/>
            <person name="Chandra I."/>
            <person name="Cherry J.M."/>
            <person name="Cawley S."/>
            <person name="Dahlke C."/>
            <person name="Davenport L.B."/>
            <person name="Davies P."/>
            <person name="de Pablos B."/>
            <person name="Delcher A."/>
            <person name="Deng Z."/>
            <person name="Mays A.D."/>
            <person name="Dew I."/>
            <person name="Dietz S.M."/>
            <person name="Dodson K."/>
            <person name="Doup L.E."/>
            <person name="Downes M."/>
            <person name="Dugan-Rocha S."/>
            <person name="Dunkov B.C."/>
            <person name="Dunn P."/>
            <person name="Durbin K.J."/>
            <person name="Evangelista C.C."/>
            <person name="Ferraz C."/>
            <person name="Ferriera S."/>
            <person name="Fleischmann W."/>
            <person name="Fosler C."/>
            <person name="Gabrielian A.E."/>
            <person name="Garg N.S."/>
            <person name="Gelbart W.M."/>
            <person name="Glasser K."/>
            <person name="Glodek A."/>
            <person name="Gong F."/>
            <person name="Gorrell J.H."/>
            <person name="Gu Z."/>
            <person name="Guan P."/>
            <person name="Harris M."/>
            <person name="Harris N.L."/>
            <person name="Harvey D.A."/>
            <person name="Heiman T.J."/>
            <person name="Hernandez J.R."/>
            <person name="Houck J."/>
            <person name="Hostin D."/>
            <person name="Houston K.A."/>
            <person name="Howland T.J."/>
            <person name="Wei M.-H."/>
            <person name="Ibegwam C."/>
            <person name="Jalali M."/>
            <person name="Kalush F."/>
            <person name="Karpen G.H."/>
            <person name="Ke Z."/>
            <person name="Kennison J.A."/>
            <person name="Ketchum K.A."/>
            <person name="Kimmel B.E."/>
            <person name="Kodira C.D."/>
            <person name="Kraft C.L."/>
            <person name="Kravitz S."/>
            <person name="Kulp D."/>
            <person name="Lai Z."/>
            <person name="Lasko P."/>
            <person name="Lei Y."/>
            <person name="Levitsky A.A."/>
            <person name="Li J.H."/>
            <person name="Li Z."/>
            <person name="Liang Y."/>
            <person name="Lin X."/>
            <person name="Liu X."/>
            <person name="Mattei B."/>
            <person name="McIntosh T.C."/>
            <person name="McLeod M.P."/>
            <person name="McPherson D."/>
            <person name="Merkulov G."/>
            <person name="Milshina N.V."/>
            <person name="Mobarry C."/>
            <person name="Morris J."/>
            <person name="Moshrefi A."/>
            <person name="Mount S.M."/>
            <person name="Moy M."/>
            <person name="Murphy B."/>
            <person name="Murphy L."/>
            <person name="Muzny D.M."/>
            <person name="Nelson D.L."/>
            <person name="Nelson D.R."/>
            <person name="Nelson K.A."/>
            <person name="Nixon K."/>
            <person name="Nusskern D.R."/>
            <person name="Pacleb J.M."/>
            <person name="Palazzolo M."/>
            <person name="Pittman G.S."/>
            <person name="Pan S."/>
            <person name="Pollard J."/>
            <person name="Puri V."/>
            <person name="Reese M.G."/>
            <person name="Reinert K."/>
            <person name="Remington K."/>
            <person name="Saunders R.D.C."/>
            <person name="Scheeler F."/>
            <person name="Shen H."/>
            <person name="Shue B.C."/>
            <person name="Siden-Kiamos I."/>
            <person name="Simpson M."/>
            <person name="Skupski M.P."/>
            <person name="Smith T.J."/>
            <person name="Spier E."/>
            <person name="Spradling A.C."/>
            <person name="Stapleton M."/>
            <person name="Strong R."/>
            <person name="Sun E."/>
            <person name="Svirskas R."/>
            <person name="Tector C."/>
            <person name="Turner R."/>
            <person name="Venter E."/>
            <person name="Wang A.H."/>
            <person name="Wang X."/>
            <person name="Wang Z.-Y."/>
            <person name="Wassarman D.A."/>
            <person name="Weinstock G.M."/>
            <person name="Weissenbach J."/>
            <person name="Williams S.M."/>
            <person name="Woodage T."/>
            <person name="Worley K.C."/>
            <person name="Wu D."/>
            <person name="Yang S."/>
            <person name="Yao Q.A."/>
            <person name="Ye J."/>
            <person name="Yeh R.-F."/>
            <person name="Zaveri J.S."/>
            <person name="Zhan M."/>
            <person name="Zhang G."/>
            <person name="Zhao Q."/>
            <person name="Zheng L."/>
            <person name="Zheng X.H."/>
            <person name="Zhong F.N."/>
            <person name="Zhong W."/>
            <person name="Zhou X."/>
            <person name="Zhu S.C."/>
            <person name="Zhu X."/>
            <person name="Smith H.O."/>
            <person name="Gibbs R.A."/>
            <person name="Myers E.W."/>
            <person name="Rubin G.M."/>
            <person name="Venter J.C."/>
        </authorList>
    </citation>
    <scope>NUCLEOTIDE SEQUENCE [LARGE SCALE GENOMIC DNA]</scope>
    <source>
        <strain>Berkeley</strain>
    </source>
</reference>
<reference key="2">
    <citation type="journal article" date="2002" name="Genome Biol.">
        <title>Annotation of the Drosophila melanogaster euchromatic genome: a systematic review.</title>
        <authorList>
            <person name="Misra S."/>
            <person name="Crosby M.A."/>
            <person name="Mungall C.J."/>
            <person name="Matthews B.B."/>
            <person name="Campbell K.S."/>
            <person name="Hradecky P."/>
            <person name="Huang Y."/>
            <person name="Kaminker J.S."/>
            <person name="Millburn G.H."/>
            <person name="Prochnik S.E."/>
            <person name="Smith C.D."/>
            <person name="Tupy J.L."/>
            <person name="Whitfield E.J."/>
            <person name="Bayraktaroglu L."/>
            <person name="Berman B.P."/>
            <person name="Bettencourt B.R."/>
            <person name="Celniker S.E."/>
            <person name="de Grey A.D.N.J."/>
            <person name="Drysdale R.A."/>
            <person name="Harris N.L."/>
            <person name="Richter J."/>
            <person name="Russo S."/>
            <person name="Schroeder A.J."/>
            <person name="Shu S.Q."/>
            <person name="Stapleton M."/>
            <person name="Yamada C."/>
            <person name="Ashburner M."/>
            <person name="Gelbart W.M."/>
            <person name="Rubin G.M."/>
            <person name="Lewis S.E."/>
        </authorList>
    </citation>
    <scope>GENOME REANNOTATION</scope>
    <source>
        <strain>Berkeley</strain>
    </source>
</reference>
<reference key="3">
    <citation type="journal article" date="2002" name="Genome Biol.">
        <title>A Drosophila full-length cDNA resource.</title>
        <authorList>
            <person name="Stapleton M."/>
            <person name="Carlson J.W."/>
            <person name="Brokstein P."/>
            <person name="Yu C."/>
            <person name="Champe M."/>
            <person name="George R.A."/>
            <person name="Guarin H."/>
            <person name="Kronmiller B."/>
            <person name="Pacleb J.M."/>
            <person name="Park S."/>
            <person name="Wan K.H."/>
            <person name="Rubin G.M."/>
            <person name="Celniker S.E."/>
        </authorList>
    </citation>
    <scope>NUCLEOTIDE SEQUENCE [LARGE SCALE MRNA]</scope>
    <source>
        <strain>Berkeley</strain>
        <tissue>Embryo</tissue>
    </source>
</reference>